<name>UBA1A_ARATH</name>
<evidence type="ECO:0000255" key="1">
    <source>
        <dbReference type="PROSITE-ProRule" id="PRU00176"/>
    </source>
</evidence>
<evidence type="ECO:0000256" key="2">
    <source>
        <dbReference type="SAM" id="MobiDB-lite"/>
    </source>
</evidence>
<evidence type="ECO:0000269" key="3">
    <source>
    </source>
</evidence>
<evidence type="ECO:0000305" key="4"/>
<protein>
    <recommendedName>
        <fullName>UBP1-associated proteins 1A</fullName>
    </recommendedName>
    <alternativeName>
        <fullName>UBP1-interacting protein 1a</fullName>
    </alternativeName>
</protein>
<organism>
    <name type="scientific">Arabidopsis thaliana</name>
    <name type="common">Mouse-ear cress</name>
    <dbReference type="NCBI Taxonomy" id="3702"/>
    <lineage>
        <taxon>Eukaryota</taxon>
        <taxon>Viridiplantae</taxon>
        <taxon>Streptophyta</taxon>
        <taxon>Embryophyta</taxon>
        <taxon>Tracheophyta</taxon>
        <taxon>Spermatophyta</taxon>
        <taxon>Magnoliopsida</taxon>
        <taxon>eudicotyledons</taxon>
        <taxon>Gunneridae</taxon>
        <taxon>Pentapetalae</taxon>
        <taxon>rosids</taxon>
        <taxon>malvids</taxon>
        <taxon>Brassicales</taxon>
        <taxon>Brassicaceae</taxon>
        <taxon>Camelineae</taxon>
        <taxon>Arabidopsis</taxon>
    </lineage>
</organism>
<feature type="chain" id="PRO_0000425437" description="UBP1-associated proteins 1A">
    <location>
        <begin position="1"/>
        <end position="343"/>
    </location>
</feature>
<feature type="domain" description="RRM" evidence="1">
    <location>
        <begin position="104"/>
        <end position="181"/>
    </location>
</feature>
<feature type="region of interest" description="Disordered" evidence="2">
    <location>
        <begin position="1"/>
        <end position="61"/>
    </location>
</feature>
<feature type="region of interest" description="Disordered" evidence="2">
    <location>
        <begin position="312"/>
        <end position="343"/>
    </location>
</feature>
<feature type="compositionally biased region" description="Low complexity" evidence="2">
    <location>
        <begin position="28"/>
        <end position="49"/>
    </location>
</feature>
<feature type="compositionally biased region" description="Acidic residues" evidence="2">
    <location>
        <begin position="50"/>
        <end position="61"/>
    </location>
</feature>
<feature type="compositionally biased region" description="Basic and acidic residues" evidence="2">
    <location>
        <begin position="319"/>
        <end position="330"/>
    </location>
</feature>
<feature type="sequence conflict" description="In Ref. 1; CAD28134." evidence="4" ref="1">
    <original>K</original>
    <variation>KS</variation>
    <location>
        <position position="7"/>
    </location>
</feature>
<feature type="sequence conflict" description="In Ref. 1; CAD28134." evidence="4" ref="1">
    <original>V</original>
    <variation>L</variation>
    <location>
        <position position="136"/>
    </location>
</feature>
<feature type="sequence conflict" description="In Ref. 6; AAM66107." evidence="4" ref="6">
    <original>P</original>
    <variation>S</variation>
    <location>
        <position position="209"/>
    </location>
</feature>
<feature type="sequence conflict" description="In Ref. 5; BAD43512/BAD43547." evidence="4" ref="5">
    <original>Y</original>
    <variation>C</variation>
    <location>
        <position position="304"/>
    </location>
</feature>
<comment type="function">
    <text evidence="3">Acts as a component of a complex regulating the turnover of mRNAs in the nucleus. Binds with high affinity to RNA molecules that contain U-rich sequences in 3'-UTRs. May function in complex with UBP1 and contribute to the stabilization of mRNAs in the nucleus. However, unlike UBP1, UBA1A does not stimulate pre-mRNA splicing.</text>
</comment>
<comment type="subunit">
    <text evidence="3">Interacts with UBA1A, UBA2A, UBP1A, UBP1B and UBP1C.</text>
</comment>
<comment type="interaction">
    <interactant intactId="EBI-346271">
        <id>Q9SHZ6</id>
    </interactant>
    <interactant intactId="EBI-1100737">
        <id>Q8L9Y3</id>
        <label>ARR14</label>
    </interactant>
    <organismsDiffer>false</organismsDiffer>
    <experiments>5</experiments>
</comment>
<comment type="interaction">
    <interactant intactId="EBI-346271">
        <id>Q9SHZ6</id>
    </interactant>
    <interactant intactId="EBI-4442510">
        <id>Q9LP80</id>
        <label>At1g48450</label>
    </interactant>
    <organismsDiffer>false</organismsDiffer>
    <experiments>3</experiments>
</comment>
<comment type="interaction">
    <interactant intactId="EBI-346271">
        <id>Q9SHZ6</id>
    </interactant>
    <interactant intactId="EBI-4440478">
        <id>Q9ZVI3</id>
        <label>At2g38610</label>
    </interactant>
    <organismsDiffer>false</organismsDiffer>
    <experiments>3</experiments>
</comment>
<comment type="interaction">
    <interactant intactId="EBI-346271">
        <id>Q9SHZ6</id>
    </interactant>
    <interactant intactId="EBI-4440997">
        <id>Q9FG30</id>
        <label>At5g06770</label>
    </interactant>
    <organismsDiffer>false</organismsDiffer>
    <experiments>3</experiments>
</comment>
<comment type="interaction">
    <interactant intactId="EBI-346271">
        <id>Q9SHZ6</id>
    </interactant>
    <interactant intactId="EBI-4425532">
        <id>Q8GZ26</id>
        <label>BRN2</label>
    </interactant>
    <organismsDiffer>false</organismsDiffer>
    <experiments>3</experiments>
</comment>
<comment type="interaction">
    <interactant intactId="EBI-346271">
        <id>Q9SHZ6</id>
    </interactant>
    <interactant intactId="EBI-25522105">
        <id>Q0WW84</id>
        <label>RBP47B</label>
    </interactant>
    <organismsDiffer>false</organismsDiffer>
    <experiments>3</experiments>
</comment>
<comment type="interaction">
    <interactant intactId="EBI-346271">
        <id>Q9SHZ6</id>
    </interactant>
    <interactant intactId="EBI-9838721">
        <id>O64647</id>
        <label>TCP9</label>
    </interactant>
    <organismsDiffer>false</organismsDiffer>
    <experiments>3</experiments>
</comment>
<comment type="interaction">
    <interactant intactId="EBI-346271">
        <id>Q9SHZ6</id>
    </interactant>
    <interactant intactId="EBI-346271">
        <id>Q9SHZ6</id>
        <label>UBA1A</label>
    </interactant>
    <organismsDiffer>false</organismsDiffer>
    <experiments>8</experiments>
</comment>
<comment type="interaction">
    <interactant intactId="EBI-346271">
        <id>Q9SHZ6</id>
    </interactant>
    <interactant intactId="EBI-346288">
        <id>Q9LES2</id>
        <label>UBA2A</label>
    </interactant>
    <organismsDiffer>false</organismsDiffer>
    <experiments>3</experiments>
</comment>
<comment type="interaction">
    <interactant intactId="EBI-346271">
        <id>Q9SHZ6</id>
    </interactant>
    <interactant intactId="EBI-346310">
        <id>Q9SYG4</id>
        <label>UBP1A</label>
    </interactant>
    <organismsDiffer>false</organismsDiffer>
    <experiments>4</experiments>
</comment>
<comment type="interaction">
    <interactant intactId="EBI-346271">
        <id>Q9SHZ6</id>
    </interactant>
    <interactant intactId="EBI-346277">
        <id>Q9LQI9</id>
        <label>UBP1B</label>
    </interactant>
    <organismsDiffer>false</organismsDiffer>
    <experiments>2</experiments>
</comment>
<comment type="subcellular location">
    <subcellularLocation>
        <location evidence="3">Nucleus</location>
    </subcellularLocation>
</comment>
<comment type="alternative products">
    <event type="alternative splicing"/>
    <isoform>
        <id>Q9SHZ6-1</id>
        <name>1</name>
        <sequence type="displayed"/>
    </isoform>
    <text>A number of isoforms are produced. According to EST sequences.</text>
</comment>
<proteinExistence type="evidence at protein level"/>
<keyword id="KW-0025">Alternative splicing</keyword>
<keyword id="KW-0539">Nucleus</keyword>
<keyword id="KW-1185">Reference proteome</keyword>
<keyword id="KW-0694">RNA-binding</keyword>
<accession>Q9SHZ6</accession>
<accession>Q680T3</accession>
<accession>Q8L990</accession>
<accession>Q8RYD4</accession>
<accession>Q8VZW7</accession>
<reference key="1">
    <citation type="journal article" date="2002" name="Mol. Cell. Biol.">
        <title>UBA1 and UBA2, two proteins that interact with UBP1, a multifunctional effector of pre-mRNA maturation in plants.</title>
        <authorList>
            <person name="Lambermon M.H."/>
            <person name="Fu Y."/>
            <person name="Wieczorek Kirk D.A."/>
            <person name="Dupasquier M."/>
            <person name="Filipowicz W."/>
            <person name="Lorkovic Z.J."/>
        </authorList>
    </citation>
    <scope>NUCLEOTIDE SEQUENCE [MRNA]</scope>
    <scope>FUNCTION</scope>
    <scope>INTERACTION WITH UBA1A; UBA2A; UBP1A; UBP1B AND UBP1C</scope>
    <scope>SUBCELLULAR LOCATION</scope>
</reference>
<reference key="2">
    <citation type="journal article" date="1999" name="Nature">
        <title>Sequence and analysis of chromosome 2 of the plant Arabidopsis thaliana.</title>
        <authorList>
            <person name="Lin X."/>
            <person name="Kaul S."/>
            <person name="Rounsley S.D."/>
            <person name="Shea T.P."/>
            <person name="Benito M.-I."/>
            <person name="Town C.D."/>
            <person name="Fujii C.Y."/>
            <person name="Mason T.M."/>
            <person name="Bowman C.L."/>
            <person name="Barnstead M.E."/>
            <person name="Feldblyum T.V."/>
            <person name="Buell C.R."/>
            <person name="Ketchum K.A."/>
            <person name="Lee J.J."/>
            <person name="Ronning C.M."/>
            <person name="Koo H.L."/>
            <person name="Moffat K.S."/>
            <person name="Cronin L.A."/>
            <person name="Shen M."/>
            <person name="Pai G."/>
            <person name="Van Aken S."/>
            <person name="Umayam L."/>
            <person name="Tallon L.J."/>
            <person name="Gill J.E."/>
            <person name="Adams M.D."/>
            <person name="Carrera A.J."/>
            <person name="Creasy T.H."/>
            <person name="Goodman H.M."/>
            <person name="Somerville C.R."/>
            <person name="Copenhaver G.P."/>
            <person name="Preuss D."/>
            <person name="Nierman W.C."/>
            <person name="White O."/>
            <person name="Eisen J.A."/>
            <person name="Salzberg S.L."/>
            <person name="Fraser C.M."/>
            <person name="Venter J.C."/>
        </authorList>
    </citation>
    <scope>NUCLEOTIDE SEQUENCE [LARGE SCALE GENOMIC DNA]</scope>
    <source>
        <strain>cv. Columbia</strain>
    </source>
</reference>
<reference key="3">
    <citation type="journal article" date="2017" name="Plant J.">
        <title>Araport11: a complete reannotation of the Arabidopsis thaliana reference genome.</title>
        <authorList>
            <person name="Cheng C.Y."/>
            <person name="Krishnakumar V."/>
            <person name="Chan A.P."/>
            <person name="Thibaud-Nissen F."/>
            <person name="Schobel S."/>
            <person name="Town C.D."/>
        </authorList>
    </citation>
    <scope>GENOME REANNOTATION</scope>
    <source>
        <strain>cv. Columbia</strain>
    </source>
</reference>
<reference key="4">
    <citation type="journal article" date="2003" name="Science">
        <title>Empirical analysis of transcriptional activity in the Arabidopsis genome.</title>
        <authorList>
            <person name="Yamada K."/>
            <person name="Lim J."/>
            <person name="Dale J.M."/>
            <person name="Chen H."/>
            <person name="Shinn P."/>
            <person name="Palm C.J."/>
            <person name="Southwick A.M."/>
            <person name="Wu H.C."/>
            <person name="Kim C.J."/>
            <person name="Nguyen M."/>
            <person name="Pham P.K."/>
            <person name="Cheuk R.F."/>
            <person name="Karlin-Newmann G."/>
            <person name="Liu S.X."/>
            <person name="Lam B."/>
            <person name="Sakano H."/>
            <person name="Wu T."/>
            <person name="Yu G."/>
            <person name="Miranda M."/>
            <person name="Quach H.L."/>
            <person name="Tripp M."/>
            <person name="Chang C.H."/>
            <person name="Lee J.M."/>
            <person name="Toriumi M.J."/>
            <person name="Chan M.M."/>
            <person name="Tang C.C."/>
            <person name="Onodera C.S."/>
            <person name="Deng J.M."/>
            <person name="Akiyama K."/>
            <person name="Ansari Y."/>
            <person name="Arakawa T."/>
            <person name="Banh J."/>
            <person name="Banno F."/>
            <person name="Bowser L."/>
            <person name="Brooks S.Y."/>
            <person name="Carninci P."/>
            <person name="Chao Q."/>
            <person name="Choy N."/>
            <person name="Enju A."/>
            <person name="Goldsmith A.D."/>
            <person name="Gurjal M."/>
            <person name="Hansen N.F."/>
            <person name="Hayashizaki Y."/>
            <person name="Johnson-Hopson C."/>
            <person name="Hsuan V.W."/>
            <person name="Iida K."/>
            <person name="Karnes M."/>
            <person name="Khan S."/>
            <person name="Koesema E."/>
            <person name="Ishida J."/>
            <person name="Jiang P.X."/>
            <person name="Jones T."/>
            <person name="Kawai J."/>
            <person name="Kamiya A."/>
            <person name="Meyers C."/>
            <person name="Nakajima M."/>
            <person name="Narusaka M."/>
            <person name="Seki M."/>
            <person name="Sakurai T."/>
            <person name="Satou M."/>
            <person name="Tamse R."/>
            <person name="Vaysberg M."/>
            <person name="Wallender E.K."/>
            <person name="Wong C."/>
            <person name="Yamamura Y."/>
            <person name="Yuan S."/>
            <person name="Shinozaki K."/>
            <person name="Davis R.W."/>
            <person name="Theologis A."/>
            <person name="Ecker J.R."/>
        </authorList>
    </citation>
    <scope>NUCLEOTIDE SEQUENCE [LARGE SCALE MRNA]</scope>
    <source>
        <strain>cv. Columbia</strain>
    </source>
</reference>
<reference key="5">
    <citation type="submission" date="2004-09" db="EMBL/GenBank/DDBJ databases">
        <title>Large-scale analysis of RIKEN Arabidopsis full-length (RAFL) cDNAs.</title>
        <authorList>
            <person name="Totoki Y."/>
            <person name="Seki M."/>
            <person name="Ishida J."/>
            <person name="Nakajima M."/>
            <person name="Enju A."/>
            <person name="Kamiya A."/>
            <person name="Narusaka M."/>
            <person name="Shin-i T."/>
            <person name="Nakagawa M."/>
            <person name="Sakamoto N."/>
            <person name="Oishi K."/>
            <person name="Kohara Y."/>
            <person name="Kobayashi M."/>
            <person name="Toyoda A."/>
            <person name="Sakaki Y."/>
            <person name="Sakurai T."/>
            <person name="Iida K."/>
            <person name="Akiyama K."/>
            <person name="Satou M."/>
            <person name="Toyoda T."/>
            <person name="Konagaya A."/>
            <person name="Carninci P."/>
            <person name="Kawai J."/>
            <person name="Hayashizaki Y."/>
            <person name="Shinozaki K."/>
        </authorList>
    </citation>
    <scope>NUCLEOTIDE SEQUENCE [LARGE SCALE MRNA]</scope>
    <source>
        <strain>cv. Columbia</strain>
    </source>
</reference>
<reference key="6">
    <citation type="submission" date="2002-03" db="EMBL/GenBank/DDBJ databases">
        <title>Full-length cDNA from Arabidopsis thaliana.</title>
        <authorList>
            <person name="Brover V.V."/>
            <person name="Troukhan M.E."/>
            <person name="Alexandrov N.A."/>
            <person name="Lu Y.-P."/>
            <person name="Flavell R.B."/>
            <person name="Feldmann K.A."/>
        </authorList>
    </citation>
    <scope>NUCLEOTIDE SEQUENCE [LARGE SCALE MRNA]</scope>
</reference>
<dbReference type="EMBL" id="AJ439403">
    <property type="protein sequence ID" value="CAD28134.1"/>
    <property type="molecule type" value="mRNA"/>
</dbReference>
<dbReference type="EMBL" id="AC007232">
    <property type="protein sequence ID" value="AAD25815.2"/>
    <property type="molecule type" value="Genomic_DNA"/>
</dbReference>
<dbReference type="EMBL" id="CP002685">
    <property type="protein sequence ID" value="AEC07262.1"/>
    <property type="molecule type" value="Genomic_DNA"/>
</dbReference>
<dbReference type="EMBL" id="AY063782">
    <property type="protein sequence ID" value="AAL36089.1"/>
    <property type="molecule type" value="mRNA"/>
</dbReference>
<dbReference type="EMBL" id="AY117273">
    <property type="protein sequence ID" value="AAM51348.1"/>
    <property type="molecule type" value="mRNA"/>
</dbReference>
<dbReference type="EMBL" id="AK175749">
    <property type="protein sequence ID" value="BAD43512.1"/>
    <property type="molecule type" value="mRNA"/>
</dbReference>
<dbReference type="EMBL" id="AK175784">
    <property type="protein sequence ID" value="BAD43547.1"/>
    <property type="molecule type" value="mRNA"/>
</dbReference>
<dbReference type="EMBL" id="AK176364">
    <property type="protein sequence ID" value="BAD44127.1"/>
    <property type="molecule type" value="mRNA"/>
</dbReference>
<dbReference type="EMBL" id="AY088576">
    <property type="protein sequence ID" value="AAM66107.1"/>
    <property type="molecule type" value="mRNA"/>
</dbReference>
<dbReference type="PIR" id="H84608">
    <property type="entry name" value="H84608"/>
</dbReference>
<dbReference type="RefSeq" id="NP_565525.1">
    <molecule id="Q9SHZ6-1"/>
    <property type="nucleotide sequence ID" value="NM_127778.5"/>
</dbReference>
<dbReference type="SMR" id="Q9SHZ6"/>
<dbReference type="BioGRID" id="2097">
    <property type="interactions" value="12"/>
</dbReference>
<dbReference type="FunCoup" id="Q9SHZ6">
    <property type="interactions" value="92"/>
</dbReference>
<dbReference type="IntAct" id="Q9SHZ6">
    <property type="interactions" value="11"/>
</dbReference>
<dbReference type="STRING" id="3702.Q9SHZ6"/>
<dbReference type="iPTMnet" id="Q9SHZ6"/>
<dbReference type="PaxDb" id="3702-AT2G22090.2"/>
<dbReference type="ProteomicsDB" id="228592">
    <molecule id="Q9SHZ6-1"/>
</dbReference>
<dbReference type="EnsemblPlants" id="AT2G22090.1">
    <molecule id="Q9SHZ6-1"/>
    <property type="protein sequence ID" value="AT2G22090.1"/>
    <property type="gene ID" value="AT2G22090"/>
</dbReference>
<dbReference type="GeneID" id="816744"/>
<dbReference type="Gramene" id="AT2G22090.1">
    <molecule id="Q9SHZ6-1"/>
    <property type="protein sequence ID" value="AT2G22090.1"/>
    <property type="gene ID" value="AT2G22090"/>
</dbReference>
<dbReference type="KEGG" id="ath:AT2G22090"/>
<dbReference type="Araport" id="AT2G22090"/>
<dbReference type="TAIR" id="AT2G22090">
    <property type="gene designation" value="UBA1A"/>
</dbReference>
<dbReference type="eggNOG" id="KOG0118">
    <property type="taxonomic scope" value="Eukaryota"/>
</dbReference>
<dbReference type="HOGENOM" id="CLU_012062_1_6_1"/>
<dbReference type="InParanoid" id="Q9SHZ6"/>
<dbReference type="OMA" id="GNQYHPV"/>
<dbReference type="OrthoDB" id="1875751at2759"/>
<dbReference type="PRO" id="PR:Q9SHZ6"/>
<dbReference type="Proteomes" id="UP000006548">
    <property type="component" value="Chromosome 2"/>
</dbReference>
<dbReference type="ExpressionAtlas" id="Q9SHZ6">
    <property type="expression patterns" value="baseline and differential"/>
</dbReference>
<dbReference type="GO" id="GO:0005634">
    <property type="term" value="C:nucleus"/>
    <property type="evidence" value="ECO:0007669"/>
    <property type="project" value="UniProtKB-SubCell"/>
</dbReference>
<dbReference type="GO" id="GO:0042802">
    <property type="term" value="F:identical protein binding"/>
    <property type="evidence" value="ECO:0000353"/>
    <property type="project" value="IntAct"/>
</dbReference>
<dbReference type="GO" id="GO:0003723">
    <property type="term" value="F:RNA binding"/>
    <property type="evidence" value="ECO:0007669"/>
    <property type="project" value="UniProtKB-KW"/>
</dbReference>
<dbReference type="Gene3D" id="3.30.70.330">
    <property type="match status" value="1"/>
</dbReference>
<dbReference type="InterPro" id="IPR012677">
    <property type="entry name" value="Nucleotide-bd_a/b_plait_sf"/>
</dbReference>
<dbReference type="InterPro" id="IPR035979">
    <property type="entry name" value="RBD_domain_sf"/>
</dbReference>
<dbReference type="InterPro" id="IPR050886">
    <property type="entry name" value="RNA-binding_reg"/>
</dbReference>
<dbReference type="InterPro" id="IPR000504">
    <property type="entry name" value="RRM_dom"/>
</dbReference>
<dbReference type="PANTHER" id="PTHR48024">
    <property type="entry name" value="GEO13361P1-RELATED"/>
    <property type="match status" value="1"/>
</dbReference>
<dbReference type="PANTHER" id="PTHR48024:SF9">
    <property type="entry name" value="UBP1-ASSOCIATED PROTEINS 1A-RELATED"/>
    <property type="match status" value="1"/>
</dbReference>
<dbReference type="Pfam" id="PF00076">
    <property type="entry name" value="RRM_1"/>
    <property type="match status" value="1"/>
</dbReference>
<dbReference type="SMART" id="SM00360">
    <property type="entry name" value="RRM"/>
    <property type="match status" value="1"/>
</dbReference>
<dbReference type="SUPFAM" id="SSF54928">
    <property type="entry name" value="RNA-binding domain, RBD"/>
    <property type="match status" value="1"/>
</dbReference>
<dbReference type="PROSITE" id="PS50102">
    <property type="entry name" value="RRM"/>
    <property type="match status" value="1"/>
</dbReference>
<sequence length="343" mass="36150">MAKTLDKSKKRKLVKSKSTNFDKKQKINKQQQQPESSTPYSSSSSSSDSSDSESDNEFDPEELRELLQPYSKDQLVDLVCSASRIGSSIYSAVVEAADRDVTHRKIFVYGLPWETTRETLVGVFEGYGEIEECTVVIDKATGKAKGFGFVMFKTRKGAKEALKEPKKRILNRTATCQLASMGPAASGKGHDQPGPVKISMGSMANHGQPQQQQVQGQHVFNGGGMAASPFMLGNQYHPLYGAGMLGNPALAAAAAAGGGYMYPMLAGALAHGGLGSDMVQSSQMGGIGVDPSVGAAGLSALGSYFRGQSLPSTYPDSDAGGKRGTGKDSDAGGSSFHGYSNYS</sequence>
<gene>
    <name type="primary">UBA1A</name>
    <name type="ordered locus">At2g22090</name>
    <name type="ORF">T16B14.6</name>
</gene>